<reference key="1">
    <citation type="submission" date="1998-05" db="EMBL/GenBank/DDBJ databases">
        <title>Comparison of the mutS-rpoS region from Escherichia coli O157:H7, verocytotoxin-containing and non-verocytotoxin-containing E.coli.</title>
        <authorList>
            <person name="Carter P.E."/>
            <person name="Thomson-Carter F.M."/>
        </authorList>
    </citation>
    <scope>NUCLEOTIDE SEQUENCE [GENOMIC DNA]</scope>
    <source>
        <strain>O157:H7 / EHEC</strain>
    </source>
</reference>
<reference key="2">
    <citation type="journal article" date="2001" name="Nature">
        <title>Genome sequence of enterohaemorrhagic Escherichia coli O157:H7.</title>
        <authorList>
            <person name="Perna N.T."/>
            <person name="Plunkett G. III"/>
            <person name="Burland V."/>
            <person name="Mau B."/>
            <person name="Glasner J.D."/>
            <person name="Rose D.J."/>
            <person name="Mayhew G.F."/>
            <person name="Evans P.S."/>
            <person name="Gregor J."/>
            <person name="Kirkpatrick H.A."/>
            <person name="Posfai G."/>
            <person name="Hackett J."/>
            <person name="Klink S."/>
            <person name="Boutin A."/>
            <person name="Shao Y."/>
            <person name="Miller L."/>
            <person name="Grotbeck E.J."/>
            <person name="Davis N.W."/>
            <person name="Lim A."/>
            <person name="Dimalanta E.T."/>
            <person name="Potamousis K."/>
            <person name="Apodaca J."/>
            <person name="Anantharaman T.S."/>
            <person name="Lin J."/>
            <person name="Yen G."/>
            <person name="Schwartz D.C."/>
            <person name="Welch R.A."/>
            <person name="Blattner F.R."/>
        </authorList>
    </citation>
    <scope>NUCLEOTIDE SEQUENCE [LARGE SCALE GENOMIC DNA]</scope>
    <source>
        <strain>O157:H7 / EDL933 / ATCC 700927 / EHEC</strain>
    </source>
</reference>
<reference key="3">
    <citation type="journal article" date="2001" name="DNA Res.">
        <title>Complete genome sequence of enterohemorrhagic Escherichia coli O157:H7 and genomic comparison with a laboratory strain K-12.</title>
        <authorList>
            <person name="Hayashi T."/>
            <person name="Makino K."/>
            <person name="Ohnishi M."/>
            <person name="Kurokawa K."/>
            <person name="Ishii K."/>
            <person name="Yokoyama K."/>
            <person name="Han C.-G."/>
            <person name="Ohtsubo E."/>
            <person name="Nakayama K."/>
            <person name="Murata T."/>
            <person name="Tanaka M."/>
            <person name="Tobe T."/>
            <person name="Iida T."/>
            <person name="Takami H."/>
            <person name="Honda T."/>
            <person name="Sasakawa C."/>
            <person name="Ogasawara N."/>
            <person name="Yasunaga T."/>
            <person name="Kuhara S."/>
            <person name="Shiba T."/>
            <person name="Hattori M."/>
            <person name="Shinagawa H."/>
        </authorList>
    </citation>
    <scope>NUCLEOTIDE SEQUENCE [LARGE SCALE GENOMIC DNA]</scope>
    <source>
        <strain>O157:H7 / Sakai / RIMD 0509952 / EHEC</strain>
    </source>
</reference>
<reference key="4">
    <citation type="journal article" date="2002" name="Trends Microbiol.">
        <title>Two different open reading frames named slyA in the E. coli sequence databases.</title>
        <authorList>
            <person name="Heroven A.K."/>
            <person name="Dersch P."/>
        </authorList>
    </citation>
    <scope>NOMENCLATURE</scope>
</reference>
<name>HOSA_ECO57</name>
<organism>
    <name type="scientific">Escherichia coli O157:H7</name>
    <dbReference type="NCBI Taxonomy" id="83334"/>
    <lineage>
        <taxon>Bacteria</taxon>
        <taxon>Pseudomonadati</taxon>
        <taxon>Pseudomonadota</taxon>
        <taxon>Gammaproteobacteria</taxon>
        <taxon>Enterobacterales</taxon>
        <taxon>Enterobacteriaceae</taxon>
        <taxon>Escherichia</taxon>
    </lineage>
</organism>
<sequence>MTLRNKAFHQLRQLFQQHTARWQHELPDLTKPQYAVMRAIADKPGIEQVALIEAAVSTKATLAEMLARMENRGLVRREHDAADKRRRFVWLTAEGEKILAAAIPIGDSVDEEFLGRLSAEEQELFVQLVRKMMNT</sequence>
<feature type="chain" id="PRO_0000054358" description="Transcriptional regulator HosA">
    <location>
        <begin position="1"/>
        <end position="135"/>
    </location>
</feature>
<feature type="domain" description="HTH marR-type" evidence="2">
    <location>
        <begin position="4"/>
        <end position="134"/>
    </location>
</feature>
<feature type="DNA-binding region" description="H-T-H motif" evidence="2">
    <location>
        <begin position="48"/>
        <end position="71"/>
    </location>
</feature>
<comment type="function">
    <text evidence="1">Involved in the temperature-dependent positive control of flagellum-driven swimming motility and cellular aggregation. Regulates fliC expression by directly interacting with fliC promoter (By similarity).</text>
</comment>
<comment type="caution">
    <text evidence="3">Originally described as slyA, but then it was found that two distinct genes had been named slyA. This gene was renamed hosA.</text>
</comment>
<comment type="sequence caution" evidence="3">
    <conflict type="erroneous initiation">
        <sequence resource="EMBL-CDS" id="AAG57847"/>
    </conflict>
</comment>
<evidence type="ECO:0000250" key="1"/>
<evidence type="ECO:0000255" key="2">
    <source>
        <dbReference type="PROSITE-ProRule" id="PRU00345"/>
    </source>
</evidence>
<evidence type="ECO:0000305" key="3"/>
<gene>
    <name type="primary">hosA</name>
    <name type="ordered locus">Z4048</name>
    <name type="ordered locus">ECs3594</name>
</gene>
<keyword id="KW-0238">DNA-binding</keyword>
<keyword id="KW-1185">Reference proteome</keyword>
<keyword id="KW-0804">Transcription</keyword>
<keyword id="KW-0805">Transcription regulation</keyword>
<keyword id="KW-0843">Virulence</keyword>
<proteinExistence type="inferred from homology"/>
<dbReference type="EMBL" id="AJ006210">
    <property type="protein sequence ID" value="CAB43501.1"/>
    <property type="molecule type" value="Genomic_DNA"/>
</dbReference>
<dbReference type="EMBL" id="AE005174">
    <property type="protein sequence ID" value="AAG57847.1"/>
    <property type="status" value="ALT_INIT"/>
    <property type="molecule type" value="Genomic_DNA"/>
</dbReference>
<dbReference type="EMBL" id="BA000007">
    <property type="protein sequence ID" value="BAB37017.1"/>
    <property type="molecule type" value="Genomic_DNA"/>
</dbReference>
<dbReference type="PIR" id="B91078">
    <property type="entry name" value="B91078"/>
</dbReference>
<dbReference type="PIR" id="C85923">
    <property type="entry name" value="C85923"/>
</dbReference>
<dbReference type="PIR" id="T44999">
    <property type="entry name" value="T44999"/>
</dbReference>
<dbReference type="RefSeq" id="NP_311621.1">
    <property type="nucleotide sequence ID" value="NC_002695.1"/>
</dbReference>
<dbReference type="RefSeq" id="WP_000175365.1">
    <property type="nucleotide sequence ID" value="NZ_VOAI01000003.1"/>
</dbReference>
<dbReference type="SMR" id="Q7ABA6"/>
<dbReference type="STRING" id="155864.Z4048"/>
<dbReference type="GeneID" id="914684"/>
<dbReference type="KEGG" id="ece:Z4048"/>
<dbReference type="KEGG" id="ecs:ECs_3594"/>
<dbReference type="PATRIC" id="fig|386585.9.peg.3757"/>
<dbReference type="eggNOG" id="COG1846">
    <property type="taxonomic scope" value="Bacteria"/>
</dbReference>
<dbReference type="HOGENOM" id="CLU_083287_4_0_6"/>
<dbReference type="OMA" id="WNTMVSE"/>
<dbReference type="Proteomes" id="UP000000558">
    <property type="component" value="Chromosome"/>
</dbReference>
<dbReference type="Proteomes" id="UP000002519">
    <property type="component" value="Chromosome"/>
</dbReference>
<dbReference type="GO" id="GO:0003677">
    <property type="term" value="F:DNA binding"/>
    <property type="evidence" value="ECO:0007669"/>
    <property type="project" value="UniProtKB-KW"/>
</dbReference>
<dbReference type="GO" id="GO:0003700">
    <property type="term" value="F:DNA-binding transcription factor activity"/>
    <property type="evidence" value="ECO:0007669"/>
    <property type="project" value="InterPro"/>
</dbReference>
<dbReference type="Gene3D" id="1.10.10.10">
    <property type="entry name" value="Winged helix-like DNA-binding domain superfamily/Winged helix DNA-binding domain"/>
    <property type="match status" value="1"/>
</dbReference>
<dbReference type="InterPro" id="IPR000835">
    <property type="entry name" value="HTH_MarR-typ"/>
</dbReference>
<dbReference type="InterPro" id="IPR023187">
    <property type="entry name" value="Tscrpt_reg_MarR-type_CS"/>
</dbReference>
<dbReference type="InterPro" id="IPR036388">
    <property type="entry name" value="WH-like_DNA-bd_sf"/>
</dbReference>
<dbReference type="InterPro" id="IPR036390">
    <property type="entry name" value="WH_DNA-bd_sf"/>
</dbReference>
<dbReference type="PANTHER" id="PTHR42756">
    <property type="entry name" value="TRANSCRIPTIONAL REGULATOR, MARR"/>
    <property type="match status" value="1"/>
</dbReference>
<dbReference type="PANTHER" id="PTHR42756:SF1">
    <property type="entry name" value="TRANSCRIPTIONAL REPRESSOR OF EMRAB OPERON"/>
    <property type="match status" value="1"/>
</dbReference>
<dbReference type="Pfam" id="PF01047">
    <property type="entry name" value="MarR"/>
    <property type="match status" value="1"/>
</dbReference>
<dbReference type="PRINTS" id="PR00598">
    <property type="entry name" value="HTHMARR"/>
</dbReference>
<dbReference type="SMART" id="SM00347">
    <property type="entry name" value="HTH_MARR"/>
    <property type="match status" value="1"/>
</dbReference>
<dbReference type="SUPFAM" id="SSF46785">
    <property type="entry name" value="Winged helix' DNA-binding domain"/>
    <property type="match status" value="1"/>
</dbReference>
<dbReference type="PROSITE" id="PS01117">
    <property type="entry name" value="HTH_MARR_1"/>
    <property type="match status" value="1"/>
</dbReference>
<dbReference type="PROSITE" id="PS50995">
    <property type="entry name" value="HTH_MARR_2"/>
    <property type="match status" value="1"/>
</dbReference>
<protein>
    <recommendedName>
        <fullName>Transcriptional regulator HosA</fullName>
    </recommendedName>
</protein>
<accession>Q7ABA6</accession>
<accession>Q8X7Z5</accession>
<accession>Q9X729</accession>